<evidence type="ECO:0000255" key="1">
    <source>
        <dbReference type="HAMAP-Rule" id="MF_00059"/>
    </source>
</evidence>
<accession>Q74L64</accession>
<comment type="function">
    <text evidence="1">DNA-dependent RNA polymerase catalyzes the transcription of DNA into RNA using the four ribonucleoside triphosphates as substrates.</text>
</comment>
<comment type="catalytic activity">
    <reaction evidence="1">
        <text>RNA(n) + a ribonucleoside 5'-triphosphate = RNA(n+1) + diphosphate</text>
        <dbReference type="Rhea" id="RHEA:21248"/>
        <dbReference type="Rhea" id="RHEA-COMP:14527"/>
        <dbReference type="Rhea" id="RHEA-COMP:17342"/>
        <dbReference type="ChEBI" id="CHEBI:33019"/>
        <dbReference type="ChEBI" id="CHEBI:61557"/>
        <dbReference type="ChEBI" id="CHEBI:140395"/>
        <dbReference type="EC" id="2.7.7.6"/>
    </reaction>
</comment>
<comment type="subunit">
    <text evidence="1">Homodimer. The RNAP catalytic core consists of 2 alpha, 1 beta, 1 beta' and 1 omega subunit. When a sigma factor is associated with the core the holoenzyme is formed, which can initiate transcription.</text>
</comment>
<comment type="domain">
    <text evidence="1">The N-terminal domain is essential for RNAP assembly and basal transcription, whereas the C-terminal domain is involved in interaction with transcriptional regulators and with upstream promoter elements.</text>
</comment>
<comment type="similarity">
    <text evidence="1">Belongs to the RNA polymerase alpha chain family.</text>
</comment>
<reference key="1">
    <citation type="journal article" date="2004" name="Proc. Natl. Acad. Sci. U.S.A.">
        <title>The genome sequence of the probiotic intestinal bacterium Lactobacillus johnsonii NCC 533.</title>
        <authorList>
            <person name="Pridmore R.D."/>
            <person name="Berger B."/>
            <person name="Desiere F."/>
            <person name="Vilanova D."/>
            <person name="Barretto C."/>
            <person name="Pittet A.-C."/>
            <person name="Zwahlen M.-C."/>
            <person name="Rouvet M."/>
            <person name="Altermann E."/>
            <person name="Barrangou R."/>
            <person name="Mollet B."/>
            <person name="Mercenier A."/>
            <person name="Klaenhammer T."/>
            <person name="Arigoni F."/>
            <person name="Schell M.A."/>
        </authorList>
    </citation>
    <scope>NUCLEOTIDE SEQUENCE [LARGE SCALE GENOMIC DNA]</scope>
    <source>
        <strain>CNCM I-1225 / La1 / NCC 533</strain>
    </source>
</reference>
<sequence length="312" mass="34813">MIEFEKPNITVVDQEEAYGKFVVEPLERGFGTTLGNSLRRVLLTSIPGTALSYIQIDGVLHEFSTIPGVREDVTKIILNLKKLELKSLSDEEKIAEIDVTGPAIVTAADLKVDSDIEVLNPDQYICSIADGGHLHMNVAIKTGRGYVPASENKTDDMPIGVIPVDSLFSPIKKVNYQVESARVGKRDDYDKLTLEIWTDGSITPNDALSFAAKILVEHFKVFMSTDMDAQFDDVMVEKEDDKNEKKLEMTIEELDLSVRSYNCLKRAGINTVQELTDKSEADMMRVRNLGRKSLEEVKNKLADLGLSLRQDD</sequence>
<keyword id="KW-0240">DNA-directed RNA polymerase</keyword>
<keyword id="KW-0548">Nucleotidyltransferase</keyword>
<keyword id="KW-0804">Transcription</keyword>
<keyword id="KW-0808">Transferase</keyword>
<name>RPOA_LACJO</name>
<gene>
    <name evidence="1" type="primary">rpoA</name>
    <name type="ordered locus">LJ_0361</name>
</gene>
<proteinExistence type="inferred from homology"/>
<dbReference type="EC" id="2.7.7.6" evidence="1"/>
<dbReference type="EMBL" id="AE017198">
    <property type="protein sequence ID" value="AAS08351.1"/>
    <property type="molecule type" value="Genomic_DNA"/>
</dbReference>
<dbReference type="RefSeq" id="WP_004895837.1">
    <property type="nucleotide sequence ID" value="NC_005362.1"/>
</dbReference>
<dbReference type="SMR" id="Q74L64"/>
<dbReference type="KEGG" id="ljo:LJ_0361"/>
<dbReference type="eggNOG" id="COG0202">
    <property type="taxonomic scope" value="Bacteria"/>
</dbReference>
<dbReference type="HOGENOM" id="CLU_053084_0_1_9"/>
<dbReference type="Proteomes" id="UP000000581">
    <property type="component" value="Chromosome"/>
</dbReference>
<dbReference type="GO" id="GO:0005737">
    <property type="term" value="C:cytoplasm"/>
    <property type="evidence" value="ECO:0007669"/>
    <property type="project" value="UniProtKB-ARBA"/>
</dbReference>
<dbReference type="GO" id="GO:0000428">
    <property type="term" value="C:DNA-directed RNA polymerase complex"/>
    <property type="evidence" value="ECO:0007669"/>
    <property type="project" value="UniProtKB-KW"/>
</dbReference>
<dbReference type="GO" id="GO:0003677">
    <property type="term" value="F:DNA binding"/>
    <property type="evidence" value="ECO:0007669"/>
    <property type="project" value="UniProtKB-UniRule"/>
</dbReference>
<dbReference type="GO" id="GO:0003899">
    <property type="term" value="F:DNA-directed RNA polymerase activity"/>
    <property type="evidence" value="ECO:0007669"/>
    <property type="project" value="UniProtKB-UniRule"/>
</dbReference>
<dbReference type="GO" id="GO:0046983">
    <property type="term" value="F:protein dimerization activity"/>
    <property type="evidence" value="ECO:0007669"/>
    <property type="project" value="InterPro"/>
</dbReference>
<dbReference type="GO" id="GO:0006351">
    <property type="term" value="P:DNA-templated transcription"/>
    <property type="evidence" value="ECO:0007669"/>
    <property type="project" value="UniProtKB-UniRule"/>
</dbReference>
<dbReference type="CDD" id="cd06928">
    <property type="entry name" value="RNAP_alpha_NTD"/>
    <property type="match status" value="1"/>
</dbReference>
<dbReference type="FunFam" id="1.10.150.20:FF:000001">
    <property type="entry name" value="DNA-directed RNA polymerase subunit alpha"/>
    <property type="match status" value="1"/>
</dbReference>
<dbReference type="FunFam" id="2.170.120.12:FF:000001">
    <property type="entry name" value="DNA-directed RNA polymerase subunit alpha"/>
    <property type="match status" value="1"/>
</dbReference>
<dbReference type="Gene3D" id="1.10.150.20">
    <property type="entry name" value="5' to 3' exonuclease, C-terminal subdomain"/>
    <property type="match status" value="1"/>
</dbReference>
<dbReference type="Gene3D" id="2.170.120.12">
    <property type="entry name" value="DNA-directed RNA polymerase, insert domain"/>
    <property type="match status" value="1"/>
</dbReference>
<dbReference type="Gene3D" id="3.30.1360.10">
    <property type="entry name" value="RNA polymerase, RBP11-like subunit"/>
    <property type="match status" value="1"/>
</dbReference>
<dbReference type="HAMAP" id="MF_00059">
    <property type="entry name" value="RNApol_bact_RpoA"/>
    <property type="match status" value="1"/>
</dbReference>
<dbReference type="InterPro" id="IPR011262">
    <property type="entry name" value="DNA-dir_RNA_pol_insert"/>
</dbReference>
<dbReference type="InterPro" id="IPR011263">
    <property type="entry name" value="DNA-dir_RNA_pol_RpoA/D/Rpb3"/>
</dbReference>
<dbReference type="InterPro" id="IPR011773">
    <property type="entry name" value="DNA-dir_RpoA"/>
</dbReference>
<dbReference type="InterPro" id="IPR036603">
    <property type="entry name" value="RBP11-like"/>
</dbReference>
<dbReference type="InterPro" id="IPR011260">
    <property type="entry name" value="RNAP_asu_C"/>
</dbReference>
<dbReference type="InterPro" id="IPR036643">
    <property type="entry name" value="RNApol_insert_sf"/>
</dbReference>
<dbReference type="NCBIfam" id="NF003513">
    <property type="entry name" value="PRK05182.1-2"/>
    <property type="match status" value="1"/>
</dbReference>
<dbReference type="NCBIfam" id="NF003515">
    <property type="entry name" value="PRK05182.2-1"/>
    <property type="match status" value="1"/>
</dbReference>
<dbReference type="NCBIfam" id="NF003516">
    <property type="entry name" value="PRK05182.2-2"/>
    <property type="match status" value="1"/>
</dbReference>
<dbReference type="NCBIfam" id="NF003519">
    <property type="entry name" value="PRK05182.2-5"/>
    <property type="match status" value="1"/>
</dbReference>
<dbReference type="NCBIfam" id="TIGR02027">
    <property type="entry name" value="rpoA"/>
    <property type="match status" value="1"/>
</dbReference>
<dbReference type="Pfam" id="PF01000">
    <property type="entry name" value="RNA_pol_A_bac"/>
    <property type="match status" value="1"/>
</dbReference>
<dbReference type="Pfam" id="PF03118">
    <property type="entry name" value="RNA_pol_A_CTD"/>
    <property type="match status" value="1"/>
</dbReference>
<dbReference type="Pfam" id="PF01193">
    <property type="entry name" value="RNA_pol_L"/>
    <property type="match status" value="1"/>
</dbReference>
<dbReference type="SMART" id="SM00662">
    <property type="entry name" value="RPOLD"/>
    <property type="match status" value="1"/>
</dbReference>
<dbReference type="SUPFAM" id="SSF47789">
    <property type="entry name" value="C-terminal domain of RNA polymerase alpha subunit"/>
    <property type="match status" value="1"/>
</dbReference>
<dbReference type="SUPFAM" id="SSF56553">
    <property type="entry name" value="Insert subdomain of RNA polymerase alpha subunit"/>
    <property type="match status" value="1"/>
</dbReference>
<dbReference type="SUPFAM" id="SSF55257">
    <property type="entry name" value="RBP11-like subunits of RNA polymerase"/>
    <property type="match status" value="1"/>
</dbReference>
<protein>
    <recommendedName>
        <fullName evidence="1">DNA-directed RNA polymerase subunit alpha</fullName>
        <shortName evidence="1">RNAP subunit alpha</shortName>
        <ecNumber evidence="1">2.7.7.6</ecNumber>
    </recommendedName>
    <alternativeName>
        <fullName evidence="1">RNA polymerase subunit alpha</fullName>
    </alternativeName>
    <alternativeName>
        <fullName evidence="1">Transcriptase subunit alpha</fullName>
    </alternativeName>
</protein>
<feature type="chain" id="PRO_0000175319" description="DNA-directed RNA polymerase subunit alpha">
    <location>
        <begin position="1"/>
        <end position="312"/>
    </location>
</feature>
<feature type="region of interest" description="Alpha N-terminal domain (alpha-NTD)" evidence="1">
    <location>
        <begin position="1"/>
        <end position="226"/>
    </location>
</feature>
<feature type="region of interest" description="Alpha C-terminal domain (alpha-CTD)" evidence="1">
    <location>
        <begin position="243"/>
        <end position="312"/>
    </location>
</feature>
<organism>
    <name type="scientific">Lactobacillus johnsonii (strain CNCM I-12250 / La1 / NCC 533)</name>
    <dbReference type="NCBI Taxonomy" id="257314"/>
    <lineage>
        <taxon>Bacteria</taxon>
        <taxon>Bacillati</taxon>
        <taxon>Bacillota</taxon>
        <taxon>Bacilli</taxon>
        <taxon>Lactobacillales</taxon>
        <taxon>Lactobacillaceae</taxon>
        <taxon>Lactobacillus</taxon>
    </lineage>
</organism>